<sequence length="77" mass="8435">MAVDVPRAVINKLMLFTAAMVVLPVLTFFIIQQFTPNTLISGGLAAAMANVVLIVYIVVAFREDTEDHKVDGNKKED</sequence>
<organism>
    <name type="scientific">Saccharomyces cerevisiae (strain YJM789)</name>
    <name type="common">Baker's yeast</name>
    <dbReference type="NCBI Taxonomy" id="307796"/>
    <lineage>
        <taxon>Eukaryota</taxon>
        <taxon>Fungi</taxon>
        <taxon>Dikarya</taxon>
        <taxon>Ascomycota</taxon>
        <taxon>Saccharomycotina</taxon>
        <taxon>Saccharomycetes</taxon>
        <taxon>Saccharomycetales</taxon>
        <taxon>Saccharomycetaceae</taxon>
        <taxon>Saccharomyces</taxon>
    </lineage>
</organism>
<proteinExistence type="inferred from homology"/>
<keyword id="KW-0968">Cytoplasmic vesicle</keyword>
<keyword id="KW-0256">Endoplasmic reticulum</keyword>
<keyword id="KW-0472">Membrane</keyword>
<keyword id="KW-0812">Transmembrane</keyword>
<keyword id="KW-1133">Transmembrane helix</keyword>
<reference key="1">
    <citation type="journal article" date="2007" name="Proc. Natl. Acad. Sci. U.S.A.">
        <title>Genome sequencing and comparative analysis of Saccharomyces cerevisiae strain YJM789.</title>
        <authorList>
            <person name="Wei W."/>
            <person name="McCusker J.H."/>
            <person name="Hyman R.W."/>
            <person name="Jones T."/>
            <person name="Ning Y."/>
            <person name="Cao Z."/>
            <person name="Gu Z."/>
            <person name="Bruno D."/>
            <person name="Miranda M."/>
            <person name="Nguyen M."/>
            <person name="Wilhelmy J."/>
            <person name="Komp C."/>
            <person name="Tamse R."/>
            <person name="Wang X."/>
            <person name="Jia P."/>
            <person name="Luedi P."/>
            <person name="Oefner P.J."/>
            <person name="David L."/>
            <person name="Dietrich F.S."/>
            <person name="Li Y."/>
            <person name="Davis R.W."/>
            <person name="Steinmetz L.M."/>
        </authorList>
    </citation>
    <scope>NUCLEOTIDE SEQUENCE [LARGE SCALE GENOMIC DNA]</scope>
    <source>
        <strain>YJM789</strain>
    </source>
</reference>
<gene>
    <name evidence="1" type="primary">VMA21</name>
    <name type="ORF">SCY_2320</name>
</gene>
<dbReference type="EMBL" id="AAFW02000102">
    <property type="protein sequence ID" value="EDN61695.1"/>
    <property type="molecule type" value="Genomic_DNA"/>
</dbReference>
<dbReference type="SMR" id="A6ZV87"/>
<dbReference type="HOGENOM" id="CLU_154717_1_0_1"/>
<dbReference type="Proteomes" id="UP000007060">
    <property type="component" value="Unassembled WGS sequence"/>
</dbReference>
<dbReference type="GO" id="GO:0005789">
    <property type="term" value="C:endoplasmic reticulum membrane"/>
    <property type="evidence" value="ECO:0007669"/>
    <property type="project" value="UniProtKB-SubCell"/>
</dbReference>
<dbReference type="GO" id="GO:0033116">
    <property type="term" value="C:endoplasmic reticulum-Golgi intermediate compartment membrane"/>
    <property type="evidence" value="ECO:0007669"/>
    <property type="project" value="UniProtKB-SubCell"/>
</dbReference>
<dbReference type="GO" id="GO:0012507">
    <property type="term" value="C:ER to Golgi transport vesicle membrane"/>
    <property type="evidence" value="ECO:0007669"/>
    <property type="project" value="UniProtKB-SubCell"/>
</dbReference>
<dbReference type="GO" id="GO:0070072">
    <property type="term" value="P:vacuolar proton-transporting V-type ATPase complex assembly"/>
    <property type="evidence" value="ECO:0007669"/>
    <property type="project" value="UniProtKB-UniRule"/>
</dbReference>
<dbReference type="HAMAP" id="MF_03058">
    <property type="entry name" value="VMA21"/>
    <property type="match status" value="1"/>
</dbReference>
<dbReference type="InterPro" id="IPR019013">
    <property type="entry name" value="Vma21"/>
</dbReference>
<dbReference type="PANTHER" id="PTHR31792">
    <property type="entry name" value="VACUOLAR ATPASE ASSEMBLY INTEGRAL MEMBRANE PROTEIN VMA21"/>
    <property type="match status" value="1"/>
</dbReference>
<dbReference type="PANTHER" id="PTHR31792:SF3">
    <property type="entry name" value="VACUOLAR ATPASE ASSEMBLY INTEGRAL MEMBRANE PROTEIN VMA21"/>
    <property type="match status" value="1"/>
</dbReference>
<dbReference type="Pfam" id="PF09446">
    <property type="entry name" value="VMA21"/>
    <property type="match status" value="1"/>
</dbReference>
<name>VMA21_YEAS7</name>
<protein>
    <recommendedName>
        <fullName evidence="1">Vacuolar ATPase assembly integral membrane protein VMA21</fullName>
    </recommendedName>
</protein>
<accession>A6ZV87</accession>
<comment type="function">
    <text evidence="1">Functions with VOA1 in assembly of the integral membrane sector (also called V0 sector) of the V-ATPase in the endoplasmic reticulum. Escorts the assembled V0 sector in COPII vesicles. Also required for normal packaging of the SNARE BOS1 and possibly the ER to Golgi transport receptor ERV29.</text>
</comment>
<comment type="subcellular location">
    <subcellularLocation>
        <location evidence="1">Endoplasmic reticulum membrane</location>
        <topology evidence="1">Multi-pass membrane protein</topology>
    </subcellularLocation>
    <subcellularLocation>
        <location evidence="1">Endoplasmic reticulum-Golgi intermediate compartment membrane</location>
        <topology evidence="1">Multi-pass membrane protein</topology>
    </subcellularLocation>
    <subcellularLocation>
        <location evidence="1">Cytoplasmic vesicle</location>
        <location evidence="1">COPII-coated vesicle membrane</location>
        <topology evidence="1">Multi-pass membrane protein</topology>
    </subcellularLocation>
</comment>
<comment type="similarity">
    <text evidence="1">Belongs to the VMA21 family.</text>
</comment>
<evidence type="ECO:0000255" key="1">
    <source>
        <dbReference type="HAMAP-Rule" id="MF_03058"/>
    </source>
</evidence>
<feature type="chain" id="PRO_0000377601" description="Vacuolar ATPase assembly integral membrane protein VMA21">
    <location>
        <begin position="1"/>
        <end position="77"/>
    </location>
</feature>
<feature type="topological domain" description="Cytoplasmic" evidence="1">
    <location>
        <begin position="1"/>
        <end position="13"/>
    </location>
</feature>
<feature type="transmembrane region" description="Helical" evidence="1">
    <location>
        <begin position="14"/>
        <end position="34"/>
    </location>
</feature>
<feature type="topological domain" description="Lumenal" evidence="1">
    <location>
        <begin position="35"/>
        <end position="38"/>
    </location>
</feature>
<feature type="transmembrane region" description="Helical" evidence="1">
    <location>
        <begin position="39"/>
        <end position="59"/>
    </location>
</feature>
<feature type="topological domain" description="Cytoplasmic" evidence="1">
    <location>
        <begin position="60"/>
        <end position="77"/>
    </location>
</feature>
<feature type="short sequence motif" description="Prevents secretion from ER">
    <location>
        <begin position="74"/>
        <end position="77"/>
    </location>
</feature>